<evidence type="ECO:0000255" key="1">
    <source>
        <dbReference type="HAMAP-Rule" id="MF_00122"/>
    </source>
</evidence>
<proteinExistence type="inferred from homology"/>
<gene>
    <name evidence="1" type="primary">gatC</name>
    <name type="ordered locus">Syncc9605_0287</name>
</gene>
<sequence length="97" mass="10785">MSQISSDDVRKVAQLARLDLPEDKIATYTGQLESILEYVGQLQQVDTEGVPETTRAVEVTNVTRVDGVQPTAVREDILDQAPQREGDFFRVPKILAD</sequence>
<accession>Q3AMW9</accession>
<keyword id="KW-0067">ATP-binding</keyword>
<keyword id="KW-0436">Ligase</keyword>
<keyword id="KW-0547">Nucleotide-binding</keyword>
<keyword id="KW-0648">Protein biosynthesis</keyword>
<protein>
    <recommendedName>
        <fullName evidence="1">Aspartyl/glutamyl-tRNA(Asn/Gln) amidotransferase subunit C</fullName>
        <shortName evidence="1">Asp/Glu-ADT subunit C</shortName>
        <ecNumber evidence="1">6.3.5.-</ecNumber>
    </recommendedName>
</protein>
<reference key="1">
    <citation type="submission" date="2005-07" db="EMBL/GenBank/DDBJ databases">
        <title>Complete sequence of Synechococcus sp. CC9605.</title>
        <authorList>
            <consortium name="US DOE Joint Genome Institute"/>
            <person name="Copeland A."/>
            <person name="Lucas S."/>
            <person name="Lapidus A."/>
            <person name="Barry K."/>
            <person name="Detter J.C."/>
            <person name="Glavina T."/>
            <person name="Hammon N."/>
            <person name="Israni S."/>
            <person name="Pitluck S."/>
            <person name="Schmutz J."/>
            <person name="Martinez M."/>
            <person name="Larimer F."/>
            <person name="Land M."/>
            <person name="Kyrpides N."/>
            <person name="Ivanova N."/>
            <person name="Richardson P."/>
        </authorList>
    </citation>
    <scope>NUCLEOTIDE SEQUENCE [LARGE SCALE GENOMIC DNA]</scope>
    <source>
        <strain>CC9605</strain>
    </source>
</reference>
<name>GATC_SYNSC</name>
<comment type="function">
    <text evidence="1">Allows the formation of correctly charged Asn-tRNA(Asn) or Gln-tRNA(Gln) through the transamidation of misacylated Asp-tRNA(Asn) or Glu-tRNA(Gln) in organisms which lack either or both of asparaginyl-tRNA or glutaminyl-tRNA synthetases. The reaction takes place in the presence of glutamine and ATP through an activated phospho-Asp-tRNA(Asn) or phospho-Glu-tRNA(Gln).</text>
</comment>
<comment type="catalytic activity">
    <reaction evidence="1">
        <text>L-glutamyl-tRNA(Gln) + L-glutamine + ATP + H2O = L-glutaminyl-tRNA(Gln) + L-glutamate + ADP + phosphate + H(+)</text>
        <dbReference type="Rhea" id="RHEA:17521"/>
        <dbReference type="Rhea" id="RHEA-COMP:9681"/>
        <dbReference type="Rhea" id="RHEA-COMP:9684"/>
        <dbReference type="ChEBI" id="CHEBI:15377"/>
        <dbReference type="ChEBI" id="CHEBI:15378"/>
        <dbReference type="ChEBI" id="CHEBI:29985"/>
        <dbReference type="ChEBI" id="CHEBI:30616"/>
        <dbReference type="ChEBI" id="CHEBI:43474"/>
        <dbReference type="ChEBI" id="CHEBI:58359"/>
        <dbReference type="ChEBI" id="CHEBI:78520"/>
        <dbReference type="ChEBI" id="CHEBI:78521"/>
        <dbReference type="ChEBI" id="CHEBI:456216"/>
    </reaction>
</comment>
<comment type="catalytic activity">
    <reaction evidence="1">
        <text>L-aspartyl-tRNA(Asn) + L-glutamine + ATP + H2O = L-asparaginyl-tRNA(Asn) + L-glutamate + ADP + phosphate + 2 H(+)</text>
        <dbReference type="Rhea" id="RHEA:14513"/>
        <dbReference type="Rhea" id="RHEA-COMP:9674"/>
        <dbReference type="Rhea" id="RHEA-COMP:9677"/>
        <dbReference type="ChEBI" id="CHEBI:15377"/>
        <dbReference type="ChEBI" id="CHEBI:15378"/>
        <dbReference type="ChEBI" id="CHEBI:29985"/>
        <dbReference type="ChEBI" id="CHEBI:30616"/>
        <dbReference type="ChEBI" id="CHEBI:43474"/>
        <dbReference type="ChEBI" id="CHEBI:58359"/>
        <dbReference type="ChEBI" id="CHEBI:78515"/>
        <dbReference type="ChEBI" id="CHEBI:78516"/>
        <dbReference type="ChEBI" id="CHEBI:456216"/>
    </reaction>
</comment>
<comment type="subunit">
    <text evidence="1">Heterotrimer of A, B and C subunits.</text>
</comment>
<comment type="similarity">
    <text evidence="1">Belongs to the GatC family.</text>
</comment>
<dbReference type="EC" id="6.3.5.-" evidence="1"/>
<dbReference type="EMBL" id="CP000110">
    <property type="protein sequence ID" value="ABB34063.1"/>
    <property type="molecule type" value="Genomic_DNA"/>
</dbReference>
<dbReference type="RefSeq" id="WP_011363315.1">
    <property type="nucleotide sequence ID" value="NC_007516.1"/>
</dbReference>
<dbReference type="SMR" id="Q3AMW9"/>
<dbReference type="STRING" id="110662.Syncc9605_0287"/>
<dbReference type="KEGG" id="syd:Syncc9605_0287"/>
<dbReference type="eggNOG" id="COG0721">
    <property type="taxonomic scope" value="Bacteria"/>
</dbReference>
<dbReference type="HOGENOM" id="CLU_105899_1_2_3"/>
<dbReference type="OrthoDB" id="9813938at2"/>
<dbReference type="GO" id="GO:0050566">
    <property type="term" value="F:asparaginyl-tRNA synthase (glutamine-hydrolyzing) activity"/>
    <property type="evidence" value="ECO:0007669"/>
    <property type="project" value="RHEA"/>
</dbReference>
<dbReference type="GO" id="GO:0005524">
    <property type="term" value="F:ATP binding"/>
    <property type="evidence" value="ECO:0007669"/>
    <property type="project" value="UniProtKB-KW"/>
</dbReference>
<dbReference type="GO" id="GO:0050567">
    <property type="term" value="F:glutaminyl-tRNA synthase (glutamine-hydrolyzing) activity"/>
    <property type="evidence" value="ECO:0007669"/>
    <property type="project" value="UniProtKB-UniRule"/>
</dbReference>
<dbReference type="GO" id="GO:0070681">
    <property type="term" value="P:glutaminyl-tRNAGln biosynthesis via transamidation"/>
    <property type="evidence" value="ECO:0007669"/>
    <property type="project" value="TreeGrafter"/>
</dbReference>
<dbReference type="GO" id="GO:0006450">
    <property type="term" value="P:regulation of translational fidelity"/>
    <property type="evidence" value="ECO:0007669"/>
    <property type="project" value="InterPro"/>
</dbReference>
<dbReference type="GO" id="GO:0006412">
    <property type="term" value="P:translation"/>
    <property type="evidence" value="ECO:0007669"/>
    <property type="project" value="UniProtKB-UniRule"/>
</dbReference>
<dbReference type="Gene3D" id="1.10.20.60">
    <property type="entry name" value="Glu-tRNAGln amidotransferase C subunit, N-terminal domain"/>
    <property type="match status" value="1"/>
</dbReference>
<dbReference type="HAMAP" id="MF_00122">
    <property type="entry name" value="GatC"/>
    <property type="match status" value="1"/>
</dbReference>
<dbReference type="InterPro" id="IPR036113">
    <property type="entry name" value="Asp/Glu-ADT_sf_sub_c"/>
</dbReference>
<dbReference type="InterPro" id="IPR003837">
    <property type="entry name" value="GatC"/>
</dbReference>
<dbReference type="NCBIfam" id="TIGR00135">
    <property type="entry name" value="gatC"/>
    <property type="match status" value="1"/>
</dbReference>
<dbReference type="PANTHER" id="PTHR15004">
    <property type="entry name" value="GLUTAMYL-TRNA(GLN) AMIDOTRANSFERASE SUBUNIT C, MITOCHONDRIAL"/>
    <property type="match status" value="1"/>
</dbReference>
<dbReference type="PANTHER" id="PTHR15004:SF0">
    <property type="entry name" value="GLUTAMYL-TRNA(GLN) AMIDOTRANSFERASE SUBUNIT C, MITOCHONDRIAL"/>
    <property type="match status" value="1"/>
</dbReference>
<dbReference type="Pfam" id="PF02686">
    <property type="entry name" value="GatC"/>
    <property type="match status" value="1"/>
</dbReference>
<dbReference type="SUPFAM" id="SSF141000">
    <property type="entry name" value="Glu-tRNAGln amidotransferase C subunit"/>
    <property type="match status" value="1"/>
</dbReference>
<feature type="chain" id="PRO_1000016235" description="Aspartyl/glutamyl-tRNA(Asn/Gln) amidotransferase subunit C">
    <location>
        <begin position="1"/>
        <end position="97"/>
    </location>
</feature>
<organism>
    <name type="scientific">Synechococcus sp. (strain CC9605)</name>
    <dbReference type="NCBI Taxonomy" id="110662"/>
    <lineage>
        <taxon>Bacteria</taxon>
        <taxon>Bacillati</taxon>
        <taxon>Cyanobacteriota</taxon>
        <taxon>Cyanophyceae</taxon>
        <taxon>Synechococcales</taxon>
        <taxon>Synechococcaceae</taxon>
        <taxon>Synechococcus</taxon>
    </lineage>
</organism>